<name>SYNC_SACPA</name>
<feature type="chain" id="PRO_0000176500" description="Asparagine--tRNA ligase, cytoplasmic">
    <location>
        <begin position="1" status="less than"/>
        <end position="87"/>
    </location>
</feature>
<feature type="non-terminal residue">
    <location>
        <position position="1"/>
    </location>
</feature>
<organism>
    <name type="scientific">Saccharomyces paradoxus</name>
    <name type="common">Yeast</name>
    <name type="synonym">Saccharomyces douglasii</name>
    <dbReference type="NCBI Taxonomy" id="27291"/>
    <lineage>
        <taxon>Eukaryota</taxon>
        <taxon>Fungi</taxon>
        <taxon>Dikarya</taxon>
        <taxon>Ascomycota</taxon>
        <taxon>Saccharomycotina</taxon>
        <taxon>Saccharomycetes</taxon>
        <taxon>Saccharomycetales</taxon>
        <taxon>Saccharomycetaceae</taxon>
        <taxon>Saccharomyces</taxon>
    </lineage>
</organism>
<reference key="1">
    <citation type="journal article" date="1994" name="Yeast">
        <title>Sequence comparison of the ARG4 chromosomal regions from the two related yeasts, Saccharomyces cerevisiae and Saccharomyces douglasii.</title>
        <authorList>
            <person name="Adjiri A."/>
            <person name="Chanet R."/>
            <person name="Mezard C."/>
            <person name="Fabre F."/>
        </authorList>
    </citation>
    <scope>NUCLEOTIDE SEQUENCE [GENOMIC DNA]</scope>
</reference>
<comment type="catalytic activity">
    <reaction>
        <text>tRNA(Asn) + L-asparagine + ATP = L-asparaginyl-tRNA(Asn) + AMP + diphosphate + H(+)</text>
        <dbReference type="Rhea" id="RHEA:11180"/>
        <dbReference type="Rhea" id="RHEA-COMP:9659"/>
        <dbReference type="Rhea" id="RHEA-COMP:9674"/>
        <dbReference type="ChEBI" id="CHEBI:15378"/>
        <dbReference type="ChEBI" id="CHEBI:30616"/>
        <dbReference type="ChEBI" id="CHEBI:33019"/>
        <dbReference type="ChEBI" id="CHEBI:58048"/>
        <dbReference type="ChEBI" id="CHEBI:78442"/>
        <dbReference type="ChEBI" id="CHEBI:78515"/>
        <dbReference type="ChEBI" id="CHEBI:456215"/>
        <dbReference type="EC" id="6.1.1.22"/>
    </reaction>
</comment>
<comment type="subcellular location">
    <subcellularLocation>
        <location>Cytoplasm</location>
    </subcellularLocation>
</comment>
<comment type="similarity">
    <text evidence="1">Belongs to the class-II aminoacyl-tRNA synthetase family.</text>
</comment>
<accession>P41908</accession>
<proteinExistence type="inferred from homology"/>
<keyword id="KW-0030">Aminoacyl-tRNA synthetase</keyword>
<keyword id="KW-0067">ATP-binding</keyword>
<keyword id="KW-0963">Cytoplasm</keyword>
<keyword id="KW-0436">Ligase</keyword>
<keyword id="KW-0547">Nucleotide-binding</keyword>
<keyword id="KW-0648">Protein biosynthesis</keyword>
<sequence length="87" mass="9934">VDVLMPNVGEITGGSMRIDDMNELMAGFKREGIDTDAYYWFIDQRKYGTCPHGGYGIGTERILAWLCDRFTVRDCSLYPRFSGRCKP</sequence>
<protein>
    <recommendedName>
        <fullName>Asparagine--tRNA ligase, cytoplasmic</fullName>
        <ecNumber>6.1.1.22</ecNumber>
    </recommendedName>
    <alternativeName>
        <fullName>Asparaginyl-tRNA synthetase</fullName>
        <shortName>AsnRS</shortName>
    </alternativeName>
</protein>
<gene>
    <name type="primary">DED81</name>
</gene>
<dbReference type="EC" id="6.1.1.22"/>
<dbReference type="EMBL" id="X73886">
    <property type="protein sequence ID" value="CAA52090.1"/>
    <property type="molecule type" value="Genomic_DNA"/>
</dbReference>
<dbReference type="SMR" id="P41908"/>
<dbReference type="VEuPathDB" id="FungiDB:SPAR_H00610"/>
<dbReference type="GO" id="GO:0005737">
    <property type="term" value="C:cytoplasm"/>
    <property type="evidence" value="ECO:0007669"/>
    <property type="project" value="UniProtKB-SubCell"/>
</dbReference>
<dbReference type="GO" id="GO:0004816">
    <property type="term" value="F:asparagine-tRNA ligase activity"/>
    <property type="evidence" value="ECO:0007669"/>
    <property type="project" value="UniProtKB-EC"/>
</dbReference>
<dbReference type="GO" id="GO:0005524">
    <property type="term" value="F:ATP binding"/>
    <property type="evidence" value="ECO:0007669"/>
    <property type="project" value="UniProtKB-KW"/>
</dbReference>
<dbReference type="GO" id="GO:0006421">
    <property type="term" value="P:asparaginyl-tRNA aminoacylation"/>
    <property type="evidence" value="ECO:0007669"/>
    <property type="project" value="TreeGrafter"/>
</dbReference>
<dbReference type="Gene3D" id="3.30.930.10">
    <property type="entry name" value="Bira Bifunctional Protein, Domain 2"/>
    <property type="match status" value="1"/>
</dbReference>
<dbReference type="InterPro" id="IPR004364">
    <property type="entry name" value="Aa-tRNA-synt_II"/>
</dbReference>
<dbReference type="InterPro" id="IPR045864">
    <property type="entry name" value="aa-tRNA-synth_II/BPL/LPL"/>
</dbReference>
<dbReference type="InterPro" id="IPR002312">
    <property type="entry name" value="Asp/Asn-tRNA-synth_IIb"/>
</dbReference>
<dbReference type="PANTHER" id="PTHR22594:SF16">
    <property type="entry name" value="ASPARAGINE--TRNA LIGASE, CYTOPLASMIC"/>
    <property type="match status" value="1"/>
</dbReference>
<dbReference type="PANTHER" id="PTHR22594">
    <property type="entry name" value="ASPARTYL/LYSYL-TRNA SYNTHETASE"/>
    <property type="match status" value="1"/>
</dbReference>
<dbReference type="Pfam" id="PF00152">
    <property type="entry name" value="tRNA-synt_2"/>
    <property type="match status" value="1"/>
</dbReference>
<dbReference type="PRINTS" id="PR01042">
    <property type="entry name" value="TRNASYNTHASP"/>
</dbReference>
<dbReference type="SUPFAM" id="SSF55681">
    <property type="entry name" value="Class II aaRS and biotin synthetases"/>
    <property type="match status" value="1"/>
</dbReference>
<evidence type="ECO:0000305" key="1"/>